<name>RS14_PSESM</name>
<accession>Q889V8</accession>
<organism>
    <name type="scientific">Pseudomonas syringae pv. tomato (strain ATCC BAA-871 / DC3000)</name>
    <dbReference type="NCBI Taxonomy" id="223283"/>
    <lineage>
        <taxon>Bacteria</taxon>
        <taxon>Pseudomonadati</taxon>
        <taxon>Pseudomonadota</taxon>
        <taxon>Gammaproteobacteria</taxon>
        <taxon>Pseudomonadales</taxon>
        <taxon>Pseudomonadaceae</taxon>
        <taxon>Pseudomonas</taxon>
    </lineage>
</organism>
<comment type="function">
    <text evidence="1">Binds 16S rRNA, required for the assembly of 30S particles and may also be responsible for determining the conformation of the 16S rRNA at the A site.</text>
</comment>
<comment type="subunit">
    <text evidence="1">Part of the 30S ribosomal subunit. Contacts proteins S3 and S10.</text>
</comment>
<comment type="similarity">
    <text evidence="1">Belongs to the universal ribosomal protein uS14 family.</text>
</comment>
<sequence length="101" mass="11474">MAKKSMKNRELKRQLTVAKYAKKRAELKAIIVDLNASPEARWEATVALQKQPRDASAARMRNRCRITGRPHGVYRKFGLGRNKLREAAMRGDVPGLVKASW</sequence>
<gene>
    <name evidence="1" type="primary">rpsN</name>
    <name type="ordered locus">PSPTO_0639</name>
    <name type="ORF">PSPTO0639</name>
</gene>
<keyword id="KW-1185">Reference proteome</keyword>
<keyword id="KW-0687">Ribonucleoprotein</keyword>
<keyword id="KW-0689">Ribosomal protein</keyword>
<keyword id="KW-0694">RNA-binding</keyword>
<keyword id="KW-0699">rRNA-binding</keyword>
<reference key="1">
    <citation type="journal article" date="2003" name="Proc. Natl. Acad. Sci. U.S.A.">
        <title>The complete genome sequence of the Arabidopsis and tomato pathogen Pseudomonas syringae pv. tomato DC3000.</title>
        <authorList>
            <person name="Buell C.R."/>
            <person name="Joardar V."/>
            <person name="Lindeberg M."/>
            <person name="Selengut J."/>
            <person name="Paulsen I.T."/>
            <person name="Gwinn M.L."/>
            <person name="Dodson R.J."/>
            <person name="DeBoy R.T."/>
            <person name="Durkin A.S."/>
            <person name="Kolonay J.F."/>
            <person name="Madupu R."/>
            <person name="Daugherty S.C."/>
            <person name="Brinkac L.M."/>
            <person name="Beanan M.J."/>
            <person name="Haft D.H."/>
            <person name="Nelson W.C."/>
            <person name="Davidsen T.M."/>
            <person name="Zafar N."/>
            <person name="Zhou L."/>
            <person name="Liu J."/>
            <person name="Yuan Q."/>
            <person name="Khouri H.M."/>
            <person name="Fedorova N.B."/>
            <person name="Tran B."/>
            <person name="Russell D."/>
            <person name="Berry K.J."/>
            <person name="Utterback T.R."/>
            <person name="Van Aken S.E."/>
            <person name="Feldblyum T.V."/>
            <person name="D'Ascenzo M."/>
            <person name="Deng W.-L."/>
            <person name="Ramos A.R."/>
            <person name="Alfano J.R."/>
            <person name="Cartinhour S."/>
            <person name="Chatterjee A.K."/>
            <person name="Delaney T.P."/>
            <person name="Lazarowitz S.G."/>
            <person name="Martin G.B."/>
            <person name="Schneider D.J."/>
            <person name="Tang X."/>
            <person name="Bender C.L."/>
            <person name="White O."/>
            <person name="Fraser C.M."/>
            <person name="Collmer A."/>
        </authorList>
    </citation>
    <scope>NUCLEOTIDE SEQUENCE [LARGE SCALE GENOMIC DNA]</scope>
    <source>
        <strain>ATCC BAA-871 / DC3000</strain>
    </source>
</reference>
<evidence type="ECO:0000255" key="1">
    <source>
        <dbReference type="HAMAP-Rule" id="MF_00537"/>
    </source>
</evidence>
<evidence type="ECO:0000305" key="2"/>
<proteinExistence type="inferred from homology"/>
<protein>
    <recommendedName>
        <fullName evidence="1">Small ribosomal subunit protein uS14</fullName>
    </recommendedName>
    <alternativeName>
        <fullName evidence="2">30S ribosomal protein S14</fullName>
    </alternativeName>
</protein>
<dbReference type="EMBL" id="AE016853">
    <property type="protein sequence ID" value="AAO54181.1"/>
    <property type="molecule type" value="Genomic_DNA"/>
</dbReference>
<dbReference type="RefSeq" id="NP_790486.1">
    <property type="nucleotide sequence ID" value="NC_004578.1"/>
</dbReference>
<dbReference type="RefSeq" id="WP_002555476.1">
    <property type="nucleotide sequence ID" value="NC_004578.1"/>
</dbReference>
<dbReference type="SMR" id="Q889V8"/>
<dbReference type="STRING" id="223283.PSPTO_0639"/>
<dbReference type="GeneID" id="77280361"/>
<dbReference type="KEGG" id="pst:PSPTO_0639"/>
<dbReference type="PATRIC" id="fig|223283.9.peg.645"/>
<dbReference type="eggNOG" id="COG0199">
    <property type="taxonomic scope" value="Bacteria"/>
</dbReference>
<dbReference type="HOGENOM" id="CLU_139869_0_1_6"/>
<dbReference type="OrthoDB" id="9810484at2"/>
<dbReference type="PhylomeDB" id="Q889V8"/>
<dbReference type="Proteomes" id="UP000002515">
    <property type="component" value="Chromosome"/>
</dbReference>
<dbReference type="GO" id="GO:0005737">
    <property type="term" value="C:cytoplasm"/>
    <property type="evidence" value="ECO:0007669"/>
    <property type="project" value="UniProtKB-ARBA"/>
</dbReference>
<dbReference type="GO" id="GO:0015935">
    <property type="term" value="C:small ribosomal subunit"/>
    <property type="evidence" value="ECO:0007669"/>
    <property type="project" value="TreeGrafter"/>
</dbReference>
<dbReference type="GO" id="GO:0019843">
    <property type="term" value="F:rRNA binding"/>
    <property type="evidence" value="ECO:0007669"/>
    <property type="project" value="UniProtKB-UniRule"/>
</dbReference>
<dbReference type="GO" id="GO:0003735">
    <property type="term" value="F:structural constituent of ribosome"/>
    <property type="evidence" value="ECO:0007669"/>
    <property type="project" value="InterPro"/>
</dbReference>
<dbReference type="GO" id="GO:0006412">
    <property type="term" value="P:translation"/>
    <property type="evidence" value="ECO:0007669"/>
    <property type="project" value="UniProtKB-UniRule"/>
</dbReference>
<dbReference type="FunFam" id="1.10.287.1480:FF:000001">
    <property type="entry name" value="30S ribosomal protein S14"/>
    <property type="match status" value="1"/>
</dbReference>
<dbReference type="Gene3D" id="1.10.287.1480">
    <property type="match status" value="1"/>
</dbReference>
<dbReference type="HAMAP" id="MF_00537">
    <property type="entry name" value="Ribosomal_uS14_1"/>
    <property type="match status" value="1"/>
</dbReference>
<dbReference type="InterPro" id="IPR001209">
    <property type="entry name" value="Ribosomal_uS14"/>
</dbReference>
<dbReference type="InterPro" id="IPR023036">
    <property type="entry name" value="Ribosomal_uS14_bac/plastid"/>
</dbReference>
<dbReference type="NCBIfam" id="NF006477">
    <property type="entry name" value="PRK08881.1"/>
    <property type="match status" value="1"/>
</dbReference>
<dbReference type="PANTHER" id="PTHR19836">
    <property type="entry name" value="30S RIBOSOMAL PROTEIN S14"/>
    <property type="match status" value="1"/>
</dbReference>
<dbReference type="PANTHER" id="PTHR19836:SF19">
    <property type="entry name" value="SMALL RIBOSOMAL SUBUNIT PROTEIN US14M"/>
    <property type="match status" value="1"/>
</dbReference>
<dbReference type="Pfam" id="PF00253">
    <property type="entry name" value="Ribosomal_S14"/>
    <property type="match status" value="1"/>
</dbReference>
<dbReference type="SUPFAM" id="SSF57716">
    <property type="entry name" value="Glucocorticoid receptor-like (DNA-binding domain)"/>
    <property type="match status" value="1"/>
</dbReference>
<feature type="chain" id="PRO_1000128521" description="Small ribosomal subunit protein uS14">
    <location>
        <begin position="1"/>
        <end position="101"/>
    </location>
</feature>